<dbReference type="EMBL" id="AE016827">
    <property type="protein sequence ID" value="AAU36815.1"/>
    <property type="molecule type" value="Genomic_DNA"/>
</dbReference>
<dbReference type="RefSeq" id="WP_011199390.1">
    <property type="nucleotide sequence ID" value="NC_006300.1"/>
</dbReference>
<dbReference type="SMR" id="Q65W45"/>
<dbReference type="STRING" id="221988.MS0208"/>
<dbReference type="KEGG" id="msu:MS0208"/>
<dbReference type="eggNOG" id="COG0081">
    <property type="taxonomic scope" value="Bacteria"/>
</dbReference>
<dbReference type="HOGENOM" id="CLU_062853_0_0_6"/>
<dbReference type="OrthoDB" id="9803740at2"/>
<dbReference type="Proteomes" id="UP000000607">
    <property type="component" value="Chromosome"/>
</dbReference>
<dbReference type="GO" id="GO:0022625">
    <property type="term" value="C:cytosolic large ribosomal subunit"/>
    <property type="evidence" value="ECO:0007669"/>
    <property type="project" value="TreeGrafter"/>
</dbReference>
<dbReference type="GO" id="GO:0019843">
    <property type="term" value="F:rRNA binding"/>
    <property type="evidence" value="ECO:0007669"/>
    <property type="project" value="UniProtKB-UniRule"/>
</dbReference>
<dbReference type="GO" id="GO:0003735">
    <property type="term" value="F:structural constituent of ribosome"/>
    <property type="evidence" value="ECO:0007669"/>
    <property type="project" value="InterPro"/>
</dbReference>
<dbReference type="GO" id="GO:0000049">
    <property type="term" value="F:tRNA binding"/>
    <property type="evidence" value="ECO:0007669"/>
    <property type="project" value="UniProtKB-KW"/>
</dbReference>
<dbReference type="GO" id="GO:0006417">
    <property type="term" value="P:regulation of translation"/>
    <property type="evidence" value="ECO:0007669"/>
    <property type="project" value="UniProtKB-KW"/>
</dbReference>
<dbReference type="GO" id="GO:0006412">
    <property type="term" value="P:translation"/>
    <property type="evidence" value="ECO:0007669"/>
    <property type="project" value="UniProtKB-UniRule"/>
</dbReference>
<dbReference type="CDD" id="cd00403">
    <property type="entry name" value="Ribosomal_L1"/>
    <property type="match status" value="1"/>
</dbReference>
<dbReference type="FunFam" id="3.40.50.790:FF:000001">
    <property type="entry name" value="50S ribosomal protein L1"/>
    <property type="match status" value="1"/>
</dbReference>
<dbReference type="Gene3D" id="3.30.190.20">
    <property type="match status" value="1"/>
</dbReference>
<dbReference type="Gene3D" id="3.40.50.790">
    <property type="match status" value="1"/>
</dbReference>
<dbReference type="HAMAP" id="MF_01318_B">
    <property type="entry name" value="Ribosomal_uL1_B"/>
    <property type="match status" value="1"/>
</dbReference>
<dbReference type="InterPro" id="IPR005878">
    <property type="entry name" value="Ribosom_uL1_bac-type"/>
</dbReference>
<dbReference type="InterPro" id="IPR002143">
    <property type="entry name" value="Ribosomal_uL1"/>
</dbReference>
<dbReference type="InterPro" id="IPR023674">
    <property type="entry name" value="Ribosomal_uL1-like"/>
</dbReference>
<dbReference type="InterPro" id="IPR028364">
    <property type="entry name" value="Ribosomal_uL1/biogenesis"/>
</dbReference>
<dbReference type="InterPro" id="IPR016095">
    <property type="entry name" value="Ribosomal_uL1_3-a/b-sand"/>
</dbReference>
<dbReference type="InterPro" id="IPR023673">
    <property type="entry name" value="Ribosomal_uL1_CS"/>
</dbReference>
<dbReference type="NCBIfam" id="TIGR01169">
    <property type="entry name" value="rplA_bact"/>
    <property type="match status" value="1"/>
</dbReference>
<dbReference type="PANTHER" id="PTHR36427">
    <property type="entry name" value="54S RIBOSOMAL PROTEIN L1, MITOCHONDRIAL"/>
    <property type="match status" value="1"/>
</dbReference>
<dbReference type="PANTHER" id="PTHR36427:SF3">
    <property type="entry name" value="LARGE RIBOSOMAL SUBUNIT PROTEIN UL1M"/>
    <property type="match status" value="1"/>
</dbReference>
<dbReference type="Pfam" id="PF00687">
    <property type="entry name" value="Ribosomal_L1"/>
    <property type="match status" value="1"/>
</dbReference>
<dbReference type="PIRSF" id="PIRSF002155">
    <property type="entry name" value="Ribosomal_L1"/>
    <property type="match status" value="1"/>
</dbReference>
<dbReference type="SUPFAM" id="SSF56808">
    <property type="entry name" value="Ribosomal protein L1"/>
    <property type="match status" value="1"/>
</dbReference>
<dbReference type="PROSITE" id="PS01199">
    <property type="entry name" value="RIBOSOMAL_L1"/>
    <property type="match status" value="1"/>
</dbReference>
<comment type="function">
    <text evidence="1">Binds directly to 23S rRNA. The L1 stalk is quite mobile in the ribosome, and is involved in E site tRNA release.</text>
</comment>
<comment type="function">
    <text evidence="1">Protein L1 is also a translational repressor protein, it controls the translation of the L11 operon by binding to its mRNA.</text>
</comment>
<comment type="subunit">
    <text evidence="1">Part of the 50S ribosomal subunit.</text>
</comment>
<comment type="similarity">
    <text evidence="1">Belongs to the universal ribosomal protein uL1 family.</text>
</comment>
<reference key="1">
    <citation type="journal article" date="2004" name="Nat. Biotechnol.">
        <title>The genome sequence of the capnophilic rumen bacterium Mannheimia succiniciproducens.</title>
        <authorList>
            <person name="Hong S.H."/>
            <person name="Kim J.S."/>
            <person name="Lee S.Y."/>
            <person name="In Y.H."/>
            <person name="Choi S.S."/>
            <person name="Rih J.-K."/>
            <person name="Kim C.H."/>
            <person name="Jeong H."/>
            <person name="Hur C.G."/>
            <person name="Kim J.J."/>
        </authorList>
    </citation>
    <scope>NUCLEOTIDE SEQUENCE [LARGE SCALE GENOMIC DNA]</scope>
    <source>
        <strain>KCTC 0769BP / MBEL55E</strain>
    </source>
</reference>
<organism>
    <name type="scientific">Mannheimia succiniciproducens (strain KCTC 0769BP / MBEL55E)</name>
    <dbReference type="NCBI Taxonomy" id="221988"/>
    <lineage>
        <taxon>Bacteria</taxon>
        <taxon>Pseudomonadati</taxon>
        <taxon>Pseudomonadota</taxon>
        <taxon>Gammaproteobacteria</taxon>
        <taxon>Pasteurellales</taxon>
        <taxon>Pasteurellaceae</taxon>
        <taxon>Basfia</taxon>
    </lineage>
</organism>
<keyword id="KW-0678">Repressor</keyword>
<keyword id="KW-0687">Ribonucleoprotein</keyword>
<keyword id="KW-0689">Ribosomal protein</keyword>
<keyword id="KW-0694">RNA-binding</keyword>
<keyword id="KW-0699">rRNA-binding</keyword>
<keyword id="KW-0810">Translation regulation</keyword>
<keyword id="KW-0820">tRNA-binding</keyword>
<proteinExistence type="inferred from homology"/>
<sequence length="229" mass="23946">MAKLTKRMKAIKAGVDSTKAYEINEAIAVLKQFATAKFDESVDVAVNLGIDPRKSDQNVRGATVLPNGTGRSVRVAVFTQGANADAAKEAGADLVGMEDLAEQIKKGEMNFDVVIASPDAMRVVGQLGQVLGPRGLMPNPKVGTVTPNVADAVKNAKSGQVRYRNDKNGIIHTTIGKASFSAEALTQNLQALLAALVKAKPTTAKGIFIKKVSISTTMGAGVAVDQNSL</sequence>
<feature type="chain" id="PRO_0000125683" description="Large ribosomal subunit protein uL1">
    <location>
        <begin position="1"/>
        <end position="229"/>
    </location>
</feature>
<name>RL1_MANSM</name>
<protein>
    <recommendedName>
        <fullName evidence="1">Large ribosomal subunit protein uL1</fullName>
    </recommendedName>
    <alternativeName>
        <fullName evidence="2">50S ribosomal protein L1</fullName>
    </alternativeName>
</protein>
<gene>
    <name evidence="1" type="primary">rplA</name>
    <name type="ordered locus">MS0208</name>
</gene>
<accession>Q65W45</accession>
<evidence type="ECO:0000255" key="1">
    <source>
        <dbReference type="HAMAP-Rule" id="MF_01318"/>
    </source>
</evidence>
<evidence type="ECO:0000305" key="2"/>